<keyword id="KW-0067">ATP-binding</keyword>
<keyword id="KW-0227">DNA damage</keyword>
<keyword id="KW-0234">DNA repair</keyword>
<keyword id="KW-0238">DNA-binding</keyword>
<keyword id="KW-0547">Nucleotide-binding</keyword>
<keyword id="KW-0539">Nucleus</keyword>
<keyword id="KW-1185">Reference proteome</keyword>
<evidence type="ECO:0000250" key="1"/>
<evidence type="ECO:0000255" key="2"/>
<evidence type="ECO:0000256" key="3">
    <source>
        <dbReference type="SAM" id="MobiDB-lite"/>
    </source>
</evidence>
<evidence type="ECO:0000305" key="4"/>
<organism>
    <name type="scientific">Candida glabrata (strain ATCC 2001 / BCRC 20586 / JCM 3761 / NBRC 0622 / NRRL Y-65 / CBS 138)</name>
    <name type="common">Yeast</name>
    <name type="synonym">Nakaseomyces glabratus</name>
    <dbReference type="NCBI Taxonomy" id="284593"/>
    <lineage>
        <taxon>Eukaryota</taxon>
        <taxon>Fungi</taxon>
        <taxon>Dikarya</taxon>
        <taxon>Ascomycota</taxon>
        <taxon>Saccharomycotina</taxon>
        <taxon>Saccharomycetes</taxon>
        <taxon>Saccharomycetales</taxon>
        <taxon>Saccharomycetaceae</taxon>
        <taxon>Nakaseomyces</taxon>
    </lineage>
</organism>
<sequence>MKQASISRFFKKVSAVNKEKVDQVKEVEKEAEVDEVLDLTLDSENDEEQQQETPVLEPIDGEEHPTVSKVPDLNDSRLLQKQKILNASKDITNSVDVSAFNEKLKDIMNKRKLGRIKGSLIDESDEIAEQSEADEHNIKKKRKKSDQLTPLDRQVKDLKLGNMDKVLVIRVGYKYKIFAQDAIIASTILHLQLIPGKVTIDDSNPNDSKYKQFAYCSFPDVRLKVHLERLVRSGLKVAVVEQSETATTKKFDNSKAKTSVFERKITGTYSKATYATNCEFEVNHENILGTNNSIWALDIEVSDSIYKYYLWSIQLSNGEVIYDSFEESKDNFSKVETRMKYLNPSEIVSPVVDSFPIKLKKRFLDLQLCQKNYDILAEDLNIPKKELLNNRLIELWHILYRYLKEYSNEKLLNIGSNYRHFSQKISIQLQAQTINNLDLISNDDSKGTLFWILDHTRTPFGKRLLKEWLLRPLLSKDAIVDRLNAIDCILESANSIFFESLNQMMKGIPDLLRTINRVSFGKTSQREVYFLLKQLTGVIKHFEAHKDYIEVEINSNSGAIKTKSTKLASIMTQMFEFSLSSVIPQLLLMINVSAVMEKDQKKQLLGFFHLNNYDNSENIIKMQRDIDSVKAQLHDELQNIKKILKRPHLAYKDEVDFLIEVRNTQVKGIPSDWVKVNNTKMISRFLTPRTKELVELLEYQNDLLYNEISKEYDQFLNRIASYYNEVKTFIMNLAEYDCLLSLAAVSCNVGYTRPVFTDSNEQLIIAKQARNPIIESLGVDYVPNDIEMEKDSGRVLVITGPNMGGKSSYIRQIALMVIMAQIGSYVPAESLKLSVFDNVLTRIGSQDNILQGQSTFKVELSETVEIINSCTSKTLLLLDEVGRGTSTRDGNAIAWALIKYFVEEEQCPFILFTTHFTIVTTVKSPLLKSYHMNYVQHKNENENWTTVVFLYQLKAGVTDSSYGLNVAKLAGIDTHIINRAHDVAISYKNDTEFDTNMILFQKVRNILANRTTARETLKVLLELDV</sequence>
<feature type="chain" id="PRO_0000338516" description="DNA mismatch repair protein MSH3">
    <location>
        <begin position="1"/>
        <end position="1025"/>
    </location>
</feature>
<feature type="region of interest" description="Disordered" evidence="3">
    <location>
        <begin position="41"/>
        <end position="70"/>
    </location>
</feature>
<feature type="region of interest" description="Disordered" evidence="3">
    <location>
        <begin position="127"/>
        <end position="146"/>
    </location>
</feature>
<feature type="region of interest" description="Mispair-binding domain" evidence="1">
    <location>
        <begin position="142"/>
        <end position="272"/>
    </location>
</feature>
<feature type="compositionally biased region" description="Acidic residues" evidence="3">
    <location>
        <begin position="41"/>
        <end position="50"/>
    </location>
</feature>
<feature type="binding site" evidence="2">
    <location>
        <begin position="800"/>
        <end position="807"/>
    </location>
    <ligand>
        <name>ATP</name>
        <dbReference type="ChEBI" id="CHEBI:30616"/>
    </ligand>
</feature>
<accession>Q6FVN6</accession>
<protein>
    <recommendedName>
        <fullName>DNA mismatch repair protein MSH3</fullName>
    </recommendedName>
    <alternativeName>
        <fullName>MutS protein homolog 3</fullName>
    </alternativeName>
</protein>
<dbReference type="EMBL" id="CR380951">
    <property type="protein sequence ID" value="CAG58627.1"/>
    <property type="molecule type" value="Genomic_DNA"/>
</dbReference>
<dbReference type="RefSeq" id="XP_445708.1">
    <property type="nucleotide sequence ID" value="XM_445708.1"/>
</dbReference>
<dbReference type="SMR" id="Q6FVN6"/>
<dbReference type="FunCoup" id="Q6FVN6">
    <property type="interactions" value="882"/>
</dbReference>
<dbReference type="STRING" id="284593.Q6FVN6"/>
<dbReference type="EnsemblFungi" id="CAGL0E00473g-T">
    <property type="protein sequence ID" value="CAGL0E00473g-T-p1"/>
    <property type="gene ID" value="CAGL0E00473g"/>
</dbReference>
<dbReference type="KEGG" id="cgr:2887527"/>
<dbReference type="CGD" id="CAL0128716">
    <property type="gene designation" value="CAGL0E00473g"/>
</dbReference>
<dbReference type="VEuPathDB" id="FungiDB:CAGL0E00473g"/>
<dbReference type="eggNOG" id="KOG0218">
    <property type="taxonomic scope" value="Eukaryota"/>
</dbReference>
<dbReference type="HOGENOM" id="CLU_002472_0_0_1"/>
<dbReference type="InParanoid" id="Q6FVN6"/>
<dbReference type="OMA" id="INMHAAR"/>
<dbReference type="Proteomes" id="UP000002428">
    <property type="component" value="Chromosome E"/>
</dbReference>
<dbReference type="GO" id="GO:0032302">
    <property type="term" value="C:MutSbeta complex"/>
    <property type="evidence" value="ECO:0007669"/>
    <property type="project" value="EnsemblFungi"/>
</dbReference>
<dbReference type="GO" id="GO:0005524">
    <property type="term" value="F:ATP binding"/>
    <property type="evidence" value="ECO:0007669"/>
    <property type="project" value="UniProtKB-KW"/>
</dbReference>
<dbReference type="GO" id="GO:0140664">
    <property type="term" value="F:ATP-dependent DNA damage sensor activity"/>
    <property type="evidence" value="ECO:0007669"/>
    <property type="project" value="InterPro"/>
</dbReference>
<dbReference type="GO" id="GO:0000406">
    <property type="term" value="F:double-strand/single-strand DNA junction binding"/>
    <property type="evidence" value="ECO:0007669"/>
    <property type="project" value="EnsemblFungi"/>
</dbReference>
<dbReference type="GO" id="GO:0000404">
    <property type="term" value="F:heteroduplex DNA loop binding"/>
    <property type="evidence" value="ECO:0007669"/>
    <property type="project" value="EnsemblFungi"/>
</dbReference>
<dbReference type="GO" id="GO:0000403">
    <property type="term" value="F:Y-form DNA binding"/>
    <property type="evidence" value="ECO:0007669"/>
    <property type="project" value="EnsemblFungi"/>
</dbReference>
<dbReference type="GO" id="GO:0000710">
    <property type="term" value="P:meiotic mismatch repair"/>
    <property type="evidence" value="ECO:0007669"/>
    <property type="project" value="EnsemblFungi"/>
</dbReference>
<dbReference type="GO" id="GO:0006312">
    <property type="term" value="P:mitotic recombination"/>
    <property type="evidence" value="ECO:0007669"/>
    <property type="project" value="EnsemblFungi"/>
</dbReference>
<dbReference type="GO" id="GO:0000735">
    <property type="term" value="P:removal of nonhomologous ends"/>
    <property type="evidence" value="ECO:0007669"/>
    <property type="project" value="EnsemblFungi"/>
</dbReference>
<dbReference type="GO" id="GO:0043111">
    <property type="term" value="P:replication fork arrest"/>
    <property type="evidence" value="ECO:0007669"/>
    <property type="project" value="EnsemblFungi"/>
</dbReference>
<dbReference type="Gene3D" id="1.10.1420.10">
    <property type="match status" value="2"/>
</dbReference>
<dbReference type="Gene3D" id="3.40.1170.10">
    <property type="entry name" value="DNA repair protein MutS, domain I"/>
    <property type="match status" value="1"/>
</dbReference>
<dbReference type="Gene3D" id="3.40.50.300">
    <property type="entry name" value="P-loop containing nucleotide triphosphate hydrolases"/>
    <property type="match status" value="1"/>
</dbReference>
<dbReference type="InterPro" id="IPR007695">
    <property type="entry name" value="DNA_mismatch_repair_MutS-lik_N"/>
</dbReference>
<dbReference type="InterPro" id="IPR017261">
    <property type="entry name" value="DNA_mismatch_repair_MutS/MSH"/>
</dbReference>
<dbReference type="InterPro" id="IPR000432">
    <property type="entry name" value="DNA_mismatch_repair_MutS_C"/>
</dbReference>
<dbReference type="InterPro" id="IPR007861">
    <property type="entry name" value="DNA_mismatch_repair_MutS_clamp"/>
</dbReference>
<dbReference type="InterPro" id="IPR007696">
    <property type="entry name" value="DNA_mismatch_repair_MutS_core"/>
</dbReference>
<dbReference type="InterPro" id="IPR016151">
    <property type="entry name" value="DNA_mismatch_repair_MutS_N"/>
</dbReference>
<dbReference type="InterPro" id="IPR036187">
    <property type="entry name" value="DNA_mismatch_repair_MutS_sf"/>
</dbReference>
<dbReference type="InterPro" id="IPR045076">
    <property type="entry name" value="MutS"/>
</dbReference>
<dbReference type="InterPro" id="IPR036678">
    <property type="entry name" value="MutS_con_dom_sf"/>
</dbReference>
<dbReference type="InterPro" id="IPR027417">
    <property type="entry name" value="P-loop_NTPase"/>
</dbReference>
<dbReference type="NCBIfam" id="NF003810">
    <property type="entry name" value="PRK05399.1"/>
    <property type="match status" value="1"/>
</dbReference>
<dbReference type="PANTHER" id="PTHR11361:SF122">
    <property type="entry name" value="DNA MISMATCH REPAIR PROTEIN MSH3"/>
    <property type="match status" value="1"/>
</dbReference>
<dbReference type="PANTHER" id="PTHR11361">
    <property type="entry name" value="DNA MISMATCH REPAIR PROTEIN MUTS FAMILY MEMBER"/>
    <property type="match status" value="1"/>
</dbReference>
<dbReference type="Pfam" id="PF01624">
    <property type="entry name" value="MutS_I"/>
    <property type="match status" value="1"/>
</dbReference>
<dbReference type="Pfam" id="PF05192">
    <property type="entry name" value="MutS_III"/>
    <property type="match status" value="1"/>
</dbReference>
<dbReference type="Pfam" id="PF05190">
    <property type="entry name" value="MutS_IV"/>
    <property type="match status" value="1"/>
</dbReference>
<dbReference type="Pfam" id="PF00488">
    <property type="entry name" value="MutS_V"/>
    <property type="match status" value="1"/>
</dbReference>
<dbReference type="PIRSF" id="PIRSF037677">
    <property type="entry name" value="DNA_mis_repair_Msh6"/>
    <property type="match status" value="1"/>
</dbReference>
<dbReference type="SMART" id="SM00534">
    <property type="entry name" value="MUTSac"/>
    <property type="match status" value="1"/>
</dbReference>
<dbReference type="SMART" id="SM00533">
    <property type="entry name" value="MUTSd"/>
    <property type="match status" value="1"/>
</dbReference>
<dbReference type="SUPFAM" id="SSF55271">
    <property type="entry name" value="DNA repair protein MutS, domain I"/>
    <property type="match status" value="1"/>
</dbReference>
<dbReference type="SUPFAM" id="SSF53150">
    <property type="entry name" value="DNA repair protein MutS, domain II"/>
    <property type="match status" value="1"/>
</dbReference>
<dbReference type="SUPFAM" id="SSF48334">
    <property type="entry name" value="DNA repair protein MutS, domain III"/>
    <property type="match status" value="1"/>
</dbReference>
<dbReference type="SUPFAM" id="SSF52540">
    <property type="entry name" value="P-loop containing nucleoside triphosphate hydrolases"/>
    <property type="match status" value="1"/>
</dbReference>
<dbReference type="PROSITE" id="PS00486">
    <property type="entry name" value="DNA_MISMATCH_REPAIR_2"/>
    <property type="match status" value="1"/>
</dbReference>
<name>MSH3_CANGA</name>
<proteinExistence type="inferred from homology"/>
<gene>
    <name type="primary">MSH3</name>
    <name type="ordered locus">CAGL0E00473g</name>
</gene>
<reference key="1">
    <citation type="journal article" date="2004" name="Nature">
        <title>Genome evolution in yeasts.</title>
        <authorList>
            <person name="Dujon B."/>
            <person name="Sherman D."/>
            <person name="Fischer G."/>
            <person name="Durrens P."/>
            <person name="Casaregola S."/>
            <person name="Lafontaine I."/>
            <person name="de Montigny J."/>
            <person name="Marck C."/>
            <person name="Neuveglise C."/>
            <person name="Talla E."/>
            <person name="Goffard N."/>
            <person name="Frangeul L."/>
            <person name="Aigle M."/>
            <person name="Anthouard V."/>
            <person name="Babour A."/>
            <person name="Barbe V."/>
            <person name="Barnay S."/>
            <person name="Blanchin S."/>
            <person name="Beckerich J.-M."/>
            <person name="Beyne E."/>
            <person name="Bleykasten C."/>
            <person name="Boisrame A."/>
            <person name="Boyer J."/>
            <person name="Cattolico L."/>
            <person name="Confanioleri F."/>
            <person name="de Daruvar A."/>
            <person name="Despons L."/>
            <person name="Fabre E."/>
            <person name="Fairhead C."/>
            <person name="Ferry-Dumazet H."/>
            <person name="Groppi A."/>
            <person name="Hantraye F."/>
            <person name="Hennequin C."/>
            <person name="Jauniaux N."/>
            <person name="Joyet P."/>
            <person name="Kachouri R."/>
            <person name="Kerrest A."/>
            <person name="Koszul R."/>
            <person name="Lemaire M."/>
            <person name="Lesur I."/>
            <person name="Ma L."/>
            <person name="Muller H."/>
            <person name="Nicaud J.-M."/>
            <person name="Nikolski M."/>
            <person name="Oztas S."/>
            <person name="Ozier-Kalogeropoulos O."/>
            <person name="Pellenz S."/>
            <person name="Potier S."/>
            <person name="Richard G.-F."/>
            <person name="Straub M.-L."/>
            <person name="Suleau A."/>
            <person name="Swennen D."/>
            <person name="Tekaia F."/>
            <person name="Wesolowski-Louvel M."/>
            <person name="Westhof E."/>
            <person name="Wirth B."/>
            <person name="Zeniou-Meyer M."/>
            <person name="Zivanovic Y."/>
            <person name="Bolotin-Fukuhara M."/>
            <person name="Thierry A."/>
            <person name="Bouchier C."/>
            <person name="Caudron B."/>
            <person name="Scarpelli C."/>
            <person name="Gaillardin C."/>
            <person name="Weissenbach J."/>
            <person name="Wincker P."/>
            <person name="Souciet J.-L."/>
        </authorList>
    </citation>
    <scope>NUCLEOTIDE SEQUENCE [LARGE SCALE GENOMIC DNA]</scope>
    <source>
        <strain>ATCC 2001 / BCRC 20586 / JCM 3761 / NBRC 0622 / NRRL Y-65 / CBS 138</strain>
    </source>
</reference>
<comment type="function">
    <text evidence="1">Component of the post-replicative DNA mismatch repair system (MMR). Heterodimerizes with MSH2 to form MutS beta, which binds to DNA mismatches thereby initiating DNA repair. MSH3 provides substrate-binding and substrate specificity to the complex. When bound, the MutS beta heterodimer bends the DNA helix and shields approximately 20 base pairs. Acts mainly to repair insertion-deletion loops (IDLs) from 2 to 13 nucleotides in size, but can also repair base-base and single insertion-deletion mismatches that occur during replication. After mismatch binding, forms a ternary complex with the MutL alpha heterodimer, which is thought to be responsible for directing the downstream MMR events, including strand discrimination, excision, and resynthesis. ATP binding and hydrolysis play a pivotal role in mismatch repair functions (By similarity).</text>
</comment>
<comment type="subunit">
    <text evidence="1">Heterodimer consisting of MSH2-MSH3 (MutS beta). Forms a ternary complex with MutL alpha (MLH1-PMS1) (By similarity).</text>
</comment>
<comment type="subcellular location">
    <subcellularLocation>
        <location evidence="1">Nucleus</location>
    </subcellularLocation>
</comment>
<comment type="similarity">
    <text evidence="4">Belongs to the DNA mismatch repair MutS family. MSH3 subfamily.</text>
</comment>